<sequence length="80" mass="9123">MPKRVLQGVVVSDKNDKTVVVKVERRYSHPLLQKTVRQSKKYKAHDENNQFKVGDFVSIQESAPISKDKRWVVLTSEAAG</sequence>
<feature type="chain" id="PRO_1000086831" description="Small ribosomal subunit protein uS17">
    <location>
        <begin position="1"/>
        <end position="80"/>
    </location>
</feature>
<evidence type="ECO:0000255" key="1">
    <source>
        <dbReference type="HAMAP-Rule" id="MF_01345"/>
    </source>
</evidence>
<evidence type="ECO:0000305" key="2"/>
<gene>
    <name evidence="1" type="primary">rpsQ</name>
    <name type="ordered locus">BCAN_A1247</name>
</gene>
<accession>A9M5P1</accession>
<keyword id="KW-1185">Reference proteome</keyword>
<keyword id="KW-0687">Ribonucleoprotein</keyword>
<keyword id="KW-0689">Ribosomal protein</keyword>
<keyword id="KW-0694">RNA-binding</keyword>
<keyword id="KW-0699">rRNA-binding</keyword>
<name>RS17_BRUC2</name>
<dbReference type="EMBL" id="CP000872">
    <property type="protein sequence ID" value="ABX62296.1"/>
    <property type="molecule type" value="Genomic_DNA"/>
</dbReference>
<dbReference type="RefSeq" id="WP_002964353.1">
    <property type="nucleotide sequence ID" value="NC_010103.1"/>
</dbReference>
<dbReference type="SMR" id="A9M5P1"/>
<dbReference type="GeneID" id="97533533"/>
<dbReference type="KEGG" id="bcs:BCAN_A1247"/>
<dbReference type="HOGENOM" id="CLU_073626_1_1_5"/>
<dbReference type="Proteomes" id="UP000001385">
    <property type="component" value="Chromosome I"/>
</dbReference>
<dbReference type="GO" id="GO:0022627">
    <property type="term" value="C:cytosolic small ribosomal subunit"/>
    <property type="evidence" value="ECO:0007669"/>
    <property type="project" value="TreeGrafter"/>
</dbReference>
<dbReference type="GO" id="GO:0019843">
    <property type="term" value="F:rRNA binding"/>
    <property type="evidence" value="ECO:0007669"/>
    <property type="project" value="UniProtKB-UniRule"/>
</dbReference>
<dbReference type="GO" id="GO:0003735">
    <property type="term" value="F:structural constituent of ribosome"/>
    <property type="evidence" value="ECO:0007669"/>
    <property type="project" value="InterPro"/>
</dbReference>
<dbReference type="GO" id="GO:0006412">
    <property type="term" value="P:translation"/>
    <property type="evidence" value="ECO:0007669"/>
    <property type="project" value="UniProtKB-UniRule"/>
</dbReference>
<dbReference type="CDD" id="cd00364">
    <property type="entry name" value="Ribosomal_uS17"/>
    <property type="match status" value="1"/>
</dbReference>
<dbReference type="Gene3D" id="2.40.50.140">
    <property type="entry name" value="Nucleic acid-binding proteins"/>
    <property type="match status" value="1"/>
</dbReference>
<dbReference type="HAMAP" id="MF_01345_B">
    <property type="entry name" value="Ribosomal_uS17_B"/>
    <property type="match status" value="1"/>
</dbReference>
<dbReference type="InterPro" id="IPR012340">
    <property type="entry name" value="NA-bd_OB-fold"/>
</dbReference>
<dbReference type="InterPro" id="IPR000266">
    <property type="entry name" value="Ribosomal_uS17"/>
</dbReference>
<dbReference type="InterPro" id="IPR019984">
    <property type="entry name" value="Ribosomal_uS17_bact/chlr"/>
</dbReference>
<dbReference type="NCBIfam" id="NF004123">
    <property type="entry name" value="PRK05610.1"/>
    <property type="match status" value="1"/>
</dbReference>
<dbReference type="NCBIfam" id="TIGR03635">
    <property type="entry name" value="uS17_bact"/>
    <property type="match status" value="1"/>
</dbReference>
<dbReference type="PANTHER" id="PTHR10744">
    <property type="entry name" value="40S RIBOSOMAL PROTEIN S11 FAMILY MEMBER"/>
    <property type="match status" value="1"/>
</dbReference>
<dbReference type="PANTHER" id="PTHR10744:SF1">
    <property type="entry name" value="SMALL RIBOSOMAL SUBUNIT PROTEIN US17M"/>
    <property type="match status" value="1"/>
</dbReference>
<dbReference type="Pfam" id="PF00366">
    <property type="entry name" value="Ribosomal_S17"/>
    <property type="match status" value="1"/>
</dbReference>
<dbReference type="PRINTS" id="PR00973">
    <property type="entry name" value="RIBOSOMALS17"/>
</dbReference>
<dbReference type="SUPFAM" id="SSF50249">
    <property type="entry name" value="Nucleic acid-binding proteins"/>
    <property type="match status" value="1"/>
</dbReference>
<reference key="1">
    <citation type="submission" date="2007-10" db="EMBL/GenBank/DDBJ databases">
        <title>Brucella canis ATCC 23365 whole genome shotgun sequencing project.</title>
        <authorList>
            <person name="Setubal J.C."/>
            <person name="Bowns C."/>
            <person name="Boyle S."/>
            <person name="Crasta O.R."/>
            <person name="Czar M.J."/>
            <person name="Dharmanolla C."/>
            <person name="Gillespie J.J."/>
            <person name="Kenyon R.W."/>
            <person name="Lu J."/>
            <person name="Mane S."/>
            <person name="Mohapatra S."/>
            <person name="Nagrani S."/>
            <person name="Purkayastha A."/>
            <person name="Rajasimha H.K."/>
            <person name="Shallom J.M."/>
            <person name="Shallom S."/>
            <person name="Shukla M."/>
            <person name="Snyder E.E."/>
            <person name="Sobral B.W."/>
            <person name="Wattam A.R."/>
            <person name="Will R."/>
            <person name="Williams K."/>
            <person name="Yoo H."/>
            <person name="Bruce D."/>
            <person name="Detter C."/>
            <person name="Munk C."/>
            <person name="Brettin T.S."/>
        </authorList>
    </citation>
    <scope>NUCLEOTIDE SEQUENCE [LARGE SCALE GENOMIC DNA]</scope>
    <source>
        <strain>ATCC 23365 / NCTC 10854 / RM-666</strain>
    </source>
</reference>
<protein>
    <recommendedName>
        <fullName evidence="1">Small ribosomal subunit protein uS17</fullName>
    </recommendedName>
    <alternativeName>
        <fullName evidence="2">30S ribosomal protein S17</fullName>
    </alternativeName>
</protein>
<organism>
    <name type="scientific">Brucella canis (strain ATCC 23365 / NCTC 10854 / RM-666)</name>
    <dbReference type="NCBI Taxonomy" id="483179"/>
    <lineage>
        <taxon>Bacteria</taxon>
        <taxon>Pseudomonadati</taxon>
        <taxon>Pseudomonadota</taxon>
        <taxon>Alphaproteobacteria</taxon>
        <taxon>Hyphomicrobiales</taxon>
        <taxon>Brucellaceae</taxon>
        <taxon>Brucella/Ochrobactrum group</taxon>
        <taxon>Brucella</taxon>
    </lineage>
</organism>
<proteinExistence type="inferred from homology"/>
<comment type="function">
    <text evidence="1">One of the primary rRNA binding proteins, it binds specifically to the 5'-end of 16S ribosomal RNA.</text>
</comment>
<comment type="subunit">
    <text evidence="1">Part of the 30S ribosomal subunit.</text>
</comment>
<comment type="similarity">
    <text evidence="1">Belongs to the universal ribosomal protein uS17 family.</text>
</comment>